<evidence type="ECO:0000250" key="1">
    <source>
        <dbReference type="UniProtKB" id="Q925N4"/>
    </source>
</evidence>
<evidence type="ECO:0000250" key="2">
    <source>
        <dbReference type="UniProtKB" id="Q9Y5I7"/>
    </source>
</evidence>
<evidence type="ECO:0000255" key="3"/>
<evidence type="ECO:0000269" key="4">
    <source>
    </source>
</evidence>
<evidence type="ECO:0000303" key="5">
    <source>
    </source>
</evidence>
<evidence type="ECO:0000305" key="6"/>
<evidence type="ECO:0000305" key="7">
    <source>
    </source>
</evidence>
<evidence type="ECO:0000312" key="8">
    <source>
        <dbReference type="RGD" id="620322"/>
    </source>
</evidence>
<proteinExistence type="evidence at protein level"/>
<sequence>MKDLLQYAACFLAIFSTGFLIVATRTDCWMVNADDSLEVSTKCRGLWWECVTNAFDGIRTCDEYDSIYAEHPLKLVVTRALMITADILAGFGFITLLLGLDCVKFLPDEPHIKVRLCFVAGTVLLIAGTPGIIGSVWYAVDVYVERSSLVLHNIFLGIQYKFGWSCWLGMAGSLGCFLAGALLTCCLYLFKDVGPERNYPYAMRKPYSTAGVSMAKSYKAPRTETAKMYAVDTRV</sequence>
<dbReference type="EMBL" id="AF333099">
    <property type="protein sequence ID" value="AAK52459.1"/>
    <property type="molecule type" value="mRNA"/>
</dbReference>
<dbReference type="SMR" id="Q91Y55"/>
<dbReference type="BioGRID" id="250891">
    <property type="interactions" value="1"/>
</dbReference>
<dbReference type="STRING" id="10116.ENSRNOP00000074628"/>
<dbReference type="iPTMnet" id="Q91Y55"/>
<dbReference type="PhosphoSitePlus" id="Q91Y55"/>
<dbReference type="PaxDb" id="10116-ENSRNOP00000044832"/>
<dbReference type="UCSC" id="RGD:620322">
    <property type="organism name" value="rat"/>
</dbReference>
<dbReference type="AGR" id="RGD:620322"/>
<dbReference type="RGD" id="620322">
    <property type="gene designation" value="Cldn16"/>
</dbReference>
<dbReference type="eggNOG" id="ENOG502QRY9">
    <property type="taxonomic scope" value="Eukaryota"/>
</dbReference>
<dbReference type="InParanoid" id="Q91Y55"/>
<dbReference type="PhylomeDB" id="Q91Y55"/>
<dbReference type="PRO" id="PR:Q91Y55"/>
<dbReference type="Proteomes" id="UP000002494">
    <property type="component" value="Unplaced"/>
</dbReference>
<dbReference type="GO" id="GO:0005923">
    <property type="term" value="C:bicellular tight junction"/>
    <property type="evidence" value="ECO:0000314"/>
    <property type="project" value="RGD"/>
</dbReference>
<dbReference type="GO" id="GO:0005886">
    <property type="term" value="C:plasma membrane"/>
    <property type="evidence" value="ECO:0000318"/>
    <property type="project" value="GO_Central"/>
</dbReference>
<dbReference type="GO" id="GO:0070160">
    <property type="term" value="C:tight junction"/>
    <property type="evidence" value="ECO:0000266"/>
    <property type="project" value="RGD"/>
</dbReference>
<dbReference type="GO" id="GO:0042802">
    <property type="term" value="F:identical protein binding"/>
    <property type="evidence" value="ECO:0000250"/>
    <property type="project" value="UniProtKB"/>
</dbReference>
<dbReference type="GO" id="GO:0160187">
    <property type="term" value="F:paracellular tight junction channel activity"/>
    <property type="evidence" value="ECO:0000266"/>
    <property type="project" value="RGD"/>
</dbReference>
<dbReference type="GO" id="GO:0030165">
    <property type="term" value="F:PDZ domain binding"/>
    <property type="evidence" value="ECO:0000250"/>
    <property type="project" value="UniProtKB"/>
</dbReference>
<dbReference type="GO" id="GO:0005198">
    <property type="term" value="F:structural molecule activity"/>
    <property type="evidence" value="ECO:0007669"/>
    <property type="project" value="InterPro"/>
</dbReference>
<dbReference type="GO" id="GO:0070830">
    <property type="term" value="P:bicellular tight junction assembly"/>
    <property type="evidence" value="ECO:0000318"/>
    <property type="project" value="GO_Central"/>
</dbReference>
<dbReference type="GO" id="GO:0016338">
    <property type="term" value="P:calcium-independent cell-cell adhesion via plasma membrane cell-adhesion molecules"/>
    <property type="evidence" value="ECO:0000250"/>
    <property type="project" value="UniProtKB"/>
</dbReference>
<dbReference type="GO" id="GO:0007155">
    <property type="term" value="P:cell adhesion"/>
    <property type="evidence" value="ECO:0000318"/>
    <property type="project" value="GO_Central"/>
</dbReference>
<dbReference type="GO" id="GO:0006811">
    <property type="term" value="P:monoatomic ion transport"/>
    <property type="evidence" value="ECO:0007669"/>
    <property type="project" value="UniProtKB-KW"/>
</dbReference>
<dbReference type="GO" id="GO:0160184">
    <property type="term" value="P:paracellular transport"/>
    <property type="evidence" value="ECO:0000314"/>
    <property type="project" value="UniProtKB"/>
</dbReference>
<dbReference type="GO" id="GO:0051928">
    <property type="term" value="P:positive regulation of calcium ion transport"/>
    <property type="evidence" value="ECO:0000314"/>
    <property type="project" value="RGD"/>
</dbReference>
<dbReference type="GO" id="GO:0070293">
    <property type="term" value="P:renal absorption"/>
    <property type="evidence" value="ECO:0000250"/>
    <property type="project" value="UniProtKB"/>
</dbReference>
<dbReference type="GO" id="GO:0070633">
    <property type="term" value="P:transepithelial transport"/>
    <property type="evidence" value="ECO:0000314"/>
    <property type="project" value="RGD"/>
</dbReference>
<dbReference type="FunFam" id="1.20.140.150:FF:000012">
    <property type="entry name" value="Claudin"/>
    <property type="match status" value="1"/>
</dbReference>
<dbReference type="Gene3D" id="1.20.140.150">
    <property type="match status" value="1"/>
</dbReference>
<dbReference type="InterPro" id="IPR006187">
    <property type="entry name" value="Claudin"/>
</dbReference>
<dbReference type="InterPro" id="IPR003927">
    <property type="entry name" value="Claudin16"/>
</dbReference>
<dbReference type="InterPro" id="IPR017974">
    <property type="entry name" value="Claudin_CS"/>
</dbReference>
<dbReference type="InterPro" id="IPR004031">
    <property type="entry name" value="PMP22/EMP/MP20/Claudin"/>
</dbReference>
<dbReference type="PANTHER" id="PTHR12002">
    <property type="entry name" value="CLAUDIN"/>
    <property type="match status" value="1"/>
</dbReference>
<dbReference type="Pfam" id="PF00822">
    <property type="entry name" value="PMP22_Claudin"/>
    <property type="match status" value="1"/>
</dbReference>
<dbReference type="PRINTS" id="PR01077">
    <property type="entry name" value="CLAUDIN"/>
</dbReference>
<dbReference type="PRINTS" id="PR01447">
    <property type="entry name" value="CLAUDIN16"/>
</dbReference>
<dbReference type="PROSITE" id="PS01346">
    <property type="entry name" value="CLAUDIN"/>
    <property type="match status" value="1"/>
</dbReference>
<comment type="function">
    <text evidence="1 2 4">Forms paracellular channels: coassembles with CLDN19 into tight junction strands with cation-selective channels through the strands, conveying epithelial permeability in a process known as paracellular tight junction permeability (By similarity) (PubMed:15496416). Involved in the maintenance of ion gradients along the nephron. In the thick ascending limb (TAL) of Henle's loop, facilitates sodium paracellular permeability from the interstitial compartment to the lumen, contributing to the lumen-positive transepithelial potential that drives paracellular magnesium and calcium reabsorption (By similarity).</text>
</comment>
<comment type="catalytic activity">
    <reaction evidence="7">
        <text>Mg(2+)(in) = Mg(2+)(out)</text>
        <dbReference type="Rhea" id="RHEA:29827"/>
        <dbReference type="ChEBI" id="CHEBI:18420"/>
    </reaction>
</comment>
<comment type="catalytic activity">
    <reaction evidence="4">
        <text>Ca(2+)(in) = Ca(2+)(out)</text>
        <dbReference type="Rhea" id="RHEA:29671"/>
        <dbReference type="ChEBI" id="CHEBI:29108"/>
    </reaction>
</comment>
<comment type="catalytic activity">
    <reaction evidence="2">
        <text>Na(+)(in) = Na(+)(out)</text>
        <dbReference type="Rhea" id="RHEA:34963"/>
        <dbReference type="ChEBI" id="CHEBI:29101"/>
    </reaction>
</comment>
<comment type="catalytic activity">
    <reaction evidence="2">
        <text>K(+)(in) = K(+)(out)</text>
        <dbReference type="Rhea" id="RHEA:29463"/>
        <dbReference type="ChEBI" id="CHEBI:29103"/>
    </reaction>
</comment>
<comment type="catalytic activity">
    <reaction evidence="2">
        <text>Rb(+)(in) = Rb(+)(out)</text>
        <dbReference type="Rhea" id="RHEA:78547"/>
        <dbReference type="ChEBI" id="CHEBI:49847"/>
    </reaction>
</comment>
<comment type="catalytic activity">
    <reaction evidence="2">
        <text>Cs(+)(in) = Cs(+)(out)</text>
        <dbReference type="Rhea" id="RHEA:78555"/>
        <dbReference type="ChEBI" id="CHEBI:49547"/>
    </reaction>
</comment>
<comment type="catalytic activity">
    <reaction evidence="1">
        <text>Li(+)(in) = Li(+)(out)</text>
        <dbReference type="Rhea" id="RHEA:78551"/>
        <dbReference type="ChEBI" id="CHEBI:49713"/>
    </reaction>
</comment>
<comment type="subunit">
    <text evidence="2 4">Can form heteropolymeric tight junction strands with other claudins. Interacts with CLDN19 (By similarity). Interacts (via PDZ-binding motif TRV) with TJP1 (via PDZ domain) (By similarity) (PubMed:15496416). Cannot form tight junction strands on its own (By similarity).</text>
</comment>
<comment type="subcellular location">
    <subcellularLocation>
        <location evidence="4">Cell junction</location>
        <location evidence="4">Tight junction</location>
    </subcellularLocation>
    <subcellularLocation>
        <location evidence="4">Cell membrane</location>
        <topology evidence="3">Multi-pass membrane protein</topology>
    </subcellularLocation>
    <text evidence="2">Cotrafficks with CLDN19 from ER to tight junctions.</text>
</comment>
<comment type="domain">
    <text evidence="2">The first extracellular loop contains negatively charged amino acids that affect cation selectivity.</text>
</comment>
<comment type="similarity">
    <text evidence="6">Belongs to the claudin family.</text>
</comment>
<keyword id="KW-0965">Cell junction</keyword>
<keyword id="KW-1003">Cell membrane</keyword>
<keyword id="KW-0406">Ion transport</keyword>
<keyword id="KW-0460">Magnesium</keyword>
<keyword id="KW-0472">Membrane</keyword>
<keyword id="KW-1185">Reference proteome</keyword>
<keyword id="KW-0796">Tight junction</keyword>
<keyword id="KW-0812">Transmembrane</keyword>
<keyword id="KW-1133">Transmembrane helix</keyword>
<keyword id="KW-0813">Transport</keyword>
<organism>
    <name type="scientific">Rattus norvegicus</name>
    <name type="common">Rat</name>
    <dbReference type="NCBI Taxonomy" id="10116"/>
    <lineage>
        <taxon>Eukaryota</taxon>
        <taxon>Metazoa</taxon>
        <taxon>Chordata</taxon>
        <taxon>Craniata</taxon>
        <taxon>Vertebrata</taxon>
        <taxon>Euteleostomi</taxon>
        <taxon>Mammalia</taxon>
        <taxon>Eutheria</taxon>
        <taxon>Euarchontoglires</taxon>
        <taxon>Glires</taxon>
        <taxon>Rodentia</taxon>
        <taxon>Myomorpha</taxon>
        <taxon>Muroidea</taxon>
        <taxon>Muridae</taxon>
        <taxon>Murinae</taxon>
        <taxon>Rattus</taxon>
    </lineage>
</organism>
<accession>Q91Y55</accession>
<protein>
    <recommendedName>
        <fullName>Claudin-16</fullName>
    </recommendedName>
    <alternativeName>
        <fullName evidence="5">Paracellin-1</fullName>
        <shortName evidence="5">PLCN-1</shortName>
    </alternativeName>
</protein>
<name>CLD16_RAT</name>
<feature type="chain" id="PRO_0000144776" description="Claudin-16">
    <location>
        <begin position="1"/>
        <end position="235"/>
    </location>
</feature>
<feature type="topological domain" description="Cytoplasmic" evidence="3">
    <location>
        <begin position="1"/>
        <end position="3"/>
    </location>
</feature>
<feature type="transmembrane region" description="Helical" evidence="3">
    <location>
        <begin position="4"/>
        <end position="24"/>
    </location>
</feature>
<feature type="topological domain" description="Extracellular" evidence="3">
    <location>
        <begin position="25"/>
        <end position="79"/>
    </location>
</feature>
<feature type="transmembrane region" description="Helical" evidence="3">
    <location>
        <begin position="80"/>
        <end position="100"/>
    </location>
</feature>
<feature type="topological domain" description="Cytoplasmic" evidence="3">
    <location>
        <begin position="101"/>
        <end position="115"/>
    </location>
</feature>
<feature type="transmembrane region" description="Helical" evidence="3">
    <location>
        <begin position="116"/>
        <end position="136"/>
    </location>
</feature>
<feature type="topological domain" description="Extracellular" evidence="3">
    <location>
        <begin position="137"/>
        <end position="169"/>
    </location>
</feature>
<feature type="transmembrane region" description="Helical" evidence="3">
    <location>
        <begin position="170"/>
        <end position="190"/>
    </location>
</feature>
<feature type="topological domain" description="Cytoplasmic" evidence="3">
    <location>
        <begin position="191"/>
        <end position="235"/>
    </location>
</feature>
<feature type="short sequence motif" description="Interaction with TJP1" evidence="4">
    <location>
        <begin position="233"/>
        <end position="235"/>
    </location>
</feature>
<feature type="mutagenesis site" description="Loss of interaction with TJP1. Retains localization at the lateral plasma membrane but does not anchor at the tight junction." evidence="4">
    <original>T</original>
    <variation>A</variation>
    <location>
        <position position="233"/>
    </location>
</feature>
<feature type="mutagenesis site" description="No effect." evidence="4">
    <original>R</original>
    <variation>A</variation>
    <location>
        <position position="234"/>
    </location>
</feature>
<feature type="mutagenesis site" description="Loss of interaction with TJP1. Retains localization at the lateral plasma membrane but does not anchor at the tight junction." evidence="4">
    <original>V</original>
    <variation>A</variation>
    <location>
        <position position="235"/>
    </location>
</feature>
<gene>
    <name evidence="8" type="primary">Cldn16</name>
</gene>
<reference key="1">
    <citation type="journal article" date="2001" name="J. Am. Soc. Nephrol.">
        <title>Primary gene structure and expression studies of rodent paracellin-1.</title>
        <authorList>
            <person name="Weber S."/>
            <person name="Schlingmann K.P."/>
            <person name="Peters M."/>
            <person name="Nejsum L.N."/>
            <person name="Nielsen S."/>
            <person name="Engel H."/>
            <person name="Grzeschik K.H."/>
            <person name="Seyberth H.W."/>
            <person name="Grone H.J."/>
            <person name="Nusing R."/>
            <person name="Konrad M."/>
        </authorList>
    </citation>
    <scope>NUCLEOTIDE SEQUENCE [MRNA]</scope>
    <source>
        <strain>Sprague-Dawley</strain>
        <tissue>Kidney</tissue>
    </source>
</reference>
<reference key="2">
    <citation type="journal article" date="2004" name="J. Biol. Chem.">
        <title>Association of paracellin-1 with ZO-1 augments the reabsorption of divalent cations in renal epithelial cells.</title>
        <authorList>
            <person name="Ikari A."/>
            <person name="Hirai N."/>
            <person name="Shiroma M."/>
            <person name="Harada H."/>
            <person name="Sakai H."/>
            <person name="Hayashi H."/>
            <person name="Suzuki Y."/>
            <person name="Degawa M."/>
            <person name="Takagi K."/>
        </authorList>
    </citation>
    <scope>FUNCTION</scope>
    <scope>TRANSPORTER ACTIVITY</scope>
    <scope>SUBCELLULAR LOCATION</scope>
    <scope>INTERACTION WITH TJP1</scope>
    <scope>MOTIF</scope>
    <scope>MUTAGENESIS OF THR-233; ARG-234 AND VAL-235</scope>
</reference>